<sequence length="327" mass="36665">MEGIKGSEVNVPDAVFAWLLDGKGGARHLEDNDVIDSEHPCWLHLNYTHPDSAQWLASTPLLPNNVRDALAGDSVRPRVSRLGDGTLITLRCINGSTDERPDQLVAMRLYMDERLIVSTRQRKVLALDDVVNDLKEGTGPADCGGWLVDVCDALTDHASEFIEELHDKIIDLEDNLLDQHIPPRGSLALLRKQLIVMRRYMTPQRDVYARLASERLSWMTDDQRRRMQDIADRLGRGLDEIDSCIARTAVMSDEIAQVMQESLSRRTYTMSLMAMVFLPSTFLTGLFGVNLGGIPGGGYQFGFSAFCIMLVVLIGGVAWWLHRSKWL</sequence>
<keyword id="KW-0997">Cell inner membrane</keyword>
<keyword id="KW-1003">Cell membrane</keyword>
<keyword id="KW-0406">Ion transport</keyword>
<keyword id="KW-0472">Membrane</keyword>
<keyword id="KW-0812">Transmembrane</keyword>
<keyword id="KW-1133">Transmembrane helix</keyword>
<keyword id="KW-0813">Transport</keyword>
<keyword id="KW-0862">Zinc</keyword>
<gene>
    <name evidence="1" type="primary">zntB</name>
    <name type="ordered locus">Ent638_2144</name>
</gene>
<reference key="1">
    <citation type="journal article" date="2010" name="PLoS Genet.">
        <title>Genome sequence of the plant growth promoting endophytic bacterium Enterobacter sp. 638.</title>
        <authorList>
            <person name="Taghavi S."/>
            <person name="van der Lelie D."/>
            <person name="Hoffman A."/>
            <person name="Zhang Y.B."/>
            <person name="Walla M.D."/>
            <person name="Vangronsveld J."/>
            <person name="Newman L."/>
            <person name="Monchy S."/>
        </authorList>
    </citation>
    <scope>NUCLEOTIDE SEQUENCE [LARGE SCALE GENOMIC DNA]</scope>
    <source>
        <strain>638</strain>
    </source>
</reference>
<protein>
    <recommendedName>
        <fullName evidence="1">Zinc transport protein ZntB</fullName>
    </recommendedName>
</protein>
<organism>
    <name type="scientific">Enterobacter sp. (strain 638)</name>
    <dbReference type="NCBI Taxonomy" id="399742"/>
    <lineage>
        <taxon>Bacteria</taxon>
        <taxon>Pseudomonadati</taxon>
        <taxon>Pseudomonadota</taxon>
        <taxon>Gammaproteobacteria</taxon>
        <taxon>Enterobacterales</taxon>
        <taxon>Enterobacteriaceae</taxon>
        <taxon>Enterobacter</taxon>
    </lineage>
</organism>
<evidence type="ECO:0000255" key="1">
    <source>
        <dbReference type="HAMAP-Rule" id="MF_01565"/>
    </source>
</evidence>
<dbReference type="EMBL" id="CP000653">
    <property type="protein sequence ID" value="ABP60819.1"/>
    <property type="molecule type" value="Genomic_DNA"/>
</dbReference>
<dbReference type="RefSeq" id="WP_012017534.1">
    <property type="nucleotide sequence ID" value="NC_009436.1"/>
</dbReference>
<dbReference type="SMR" id="A4WAT9"/>
<dbReference type="STRING" id="399742.Ent638_2144"/>
<dbReference type="KEGG" id="ent:Ent638_2144"/>
<dbReference type="eggNOG" id="COG0598">
    <property type="taxonomic scope" value="Bacteria"/>
</dbReference>
<dbReference type="HOGENOM" id="CLU_007127_2_0_6"/>
<dbReference type="OrthoDB" id="9803484at2"/>
<dbReference type="Proteomes" id="UP000000230">
    <property type="component" value="Chromosome"/>
</dbReference>
<dbReference type="GO" id="GO:0005886">
    <property type="term" value="C:plasma membrane"/>
    <property type="evidence" value="ECO:0007669"/>
    <property type="project" value="UniProtKB-SubCell"/>
</dbReference>
<dbReference type="GO" id="GO:0050897">
    <property type="term" value="F:cobalt ion binding"/>
    <property type="evidence" value="ECO:0007669"/>
    <property type="project" value="TreeGrafter"/>
</dbReference>
<dbReference type="GO" id="GO:0015087">
    <property type="term" value="F:cobalt ion transmembrane transporter activity"/>
    <property type="evidence" value="ECO:0007669"/>
    <property type="project" value="TreeGrafter"/>
</dbReference>
<dbReference type="GO" id="GO:0000287">
    <property type="term" value="F:magnesium ion binding"/>
    <property type="evidence" value="ECO:0007669"/>
    <property type="project" value="TreeGrafter"/>
</dbReference>
<dbReference type="GO" id="GO:0015095">
    <property type="term" value="F:magnesium ion transmembrane transporter activity"/>
    <property type="evidence" value="ECO:0007669"/>
    <property type="project" value="TreeGrafter"/>
</dbReference>
<dbReference type="GO" id="GO:0005385">
    <property type="term" value="F:zinc ion transmembrane transporter activity"/>
    <property type="evidence" value="ECO:0007669"/>
    <property type="project" value="UniProtKB-UniRule"/>
</dbReference>
<dbReference type="CDD" id="cd12833">
    <property type="entry name" value="ZntB-like_1"/>
    <property type="match status" value="1"/>
</dbReference>
<dbReference type="Gene3D" id="3.30.460.20">
    <property type="entry name" value="CorA soluble domain-like"/>
    <property type="match status" value="1"/>
</dbReference>
<dbReference type="Gene3D" id="1.20.58.340">
    <property type="entry name" value="Magnesium transport protein CorA, transmembrane region"/>
    <property type="match status" value="2"/>
</dbReference>
<dbReference type="HAMAP" id="MF_01565">
    <property type="entry name" value="ZntB"/>
    <property type="match status" value="1"/>
</dbReference>
<dbReference type="InterPro" id="IPR045861">
    <property type="entry name" value="CorA_cytoplasmic_dom"/>
</dbReference>
<dbReference type="InterPro" id="IPR045863">
    <property type="entry name" value="CorA_TM1_TM2"/>
</dbReference>
<dbReference type="InterPro" id="IPR002523">
    <property type="entry name" value="MgTranspt_CorA/ZnTranspt_ZntB"/>
</dbReference>
<dbReference type="InterPro" id="IPR023714">
    <property type="entry name" value="Zn_transp_ZntB"/>
</dbReference>
<dbReference type="NCBIfam" id="NF007092">
    <property type="entry name" value="PRK09546.1"/>
    <property type="match status" value="1"/>
</dbReference>
<dbReference type="PANTHER" id="PTHR46494">
    <property type="entry name" value="CORA FAMILY METAL ION TRANSPORTER (EUROFUNG)"/>
    <property type="match status" value="1"/>
</dbReference>
<dbReference type="PANTHER" id="PTHR46494:SF3">
    <property type="entry name" value="ZINC TRANSPORT PROTEIN ZNTB"/>
    <property type="match status" value="1"/>
</dbReference>
<dbReference type="Pfam" id="PF01544">
    <property type="entry name" value="CorA"/>
    <property type="match status" value="1"/>
</dbReference>
<dbReference type="SUPFAM" id="SSF143865">
    <property type="entry name" value="CorA soluble domain-like"/>
    <property type="match status" value="1"/>
</dbReference>
<dbReference type="SUPFAM" id="SSF144083">
    <property type="entry name" value="Magnesium transport protein CorA, transmembrane region"/>
    <property type="match status" value="1"/>
</dbReference>
<name>ZNTB_ENT38</name>
<proteinExistence type="inferred from homology"/>
<feature type="chain" id="PRO_1000069073" description="Zinc transport protein ZntB">
    <location>
        <begin position="1"/>
        <end position="327"/>
    </location>
</feature>
<feature type="topological domain" description="Cytoplasmic" evidence="1">
    <location>
        <begin position="1"/>
        <end position="273"/>
    </location>
</feature>
<feature type="transmembrane region" description="Helical" evidence="1">
    <location>
        <begin position="274"/>
        <end position="294"/>
    </location>
</feature>
<feature type="topological domain" description="Periplasmic" evidence="1">
    <location>
        <begin position="295"/>
        <end position="300"/>
    </location>
</feature>
<feature type="transmembrane region" description="Helical" evidence="1">
    <location>
        <begin position="301"/>
        <end position="321"/>
    </location>
</feature>
<feature type="topological domain" description="Cytoplasmic" evidence="1">
    <location>
        <begin position="322"/>
        <end position="327"/>
    </location>
</feature>
<accession>A4WAT9</accession>
<comment type="function">
    <text evidence="1">Zinc transporter. Acts as a Zn(2+):proton symporter, which likely mediates zinc ion uptake.</text>
</comment>
<comment type="catalytic activity">
    <reaction evidence="1">
        <text>Zn(2+)(out) + H(+)(out) = Zn(2+)(in) + H(+)(in)</text>
        <dbReference type="Rhea" id="RHEA:71195"/>
        <dbReference type="ChEBI" id="CHEBI:15378"/>
        <dbReference type="ChEBI" id="CHEBI:29105"/>
    </reaction>
    <physiologicalReaction direction="left-to-right" evidence="1">
        <dbReference type="Rhea" id="RHEA:71196"/>
    </physiologicalReaction>
</comment>
<comment type="subcellular location">
    <subcellularLocation>
        <location evidence="1">Cell inner membrane</location>
        <topology evidence="1">Multi-pass membrane protein</topology>
    </subcellularLocation>
</comment>
<comment type="similarity">
    <text evidence="1">Belongs to the CorA metal ion transporter (MIT) (TC 1.A.35) family.</text>
</comment>